<evidence type="ECO:0000250" key="1">
    <source>
        <dbReference type="UniProtKB" id="P00540"/>
    </source>
</evidence>
<evidence type="ECO:0000255" key="2">
    <source>
        <dbReference type="PROSITE-ProRule" id="PRU00159"/>
    </source>
</evidence>
<evidence type="ECO:0000255" key="3">
    <source>
        <dbReference type="PROSITE-ProRule" id="PRU10027"/>
    </source>
</evidence>
<evidence type="ECO:0000305" key="4"/>
<name>MOS_XENLA</name>
<keyword id="KW-0067">ATP-binding</keyword>
<keyword id="KW-0963">Cytoplasm</keyword>
<keyword id="KW-0418">Kinase</keyword>
<keyword id="KW-0547">Nucleotide-binding</keyword>
<keyword id="KW-0656">Proto-oncogene</keyword>
<keyword id="KW-1185">Reference proteome</keyword>
<keyword id="KW-0723">Serine/threonine-protein kinase</keyword>
<keyword id="KW-0808">Transferase</keyword>
<feature type="chain" id="PRO_0000086358" description="Serine/threonine-protein kinase mos">
    <location>
        <begin position="1"/>
        <end position="359"/>
    </location>
</feature>
<feature type="domain" description="Protein kinase" evidence="2">
    <location>
        <begin position="63"/>
        <end position="336"/>
    </location>
</feature>
<feature type="active site" description="Proton acceptor" evidence="2 3">
    <location>
        <position position="189"/>
    </location>
</feature>
<feature type="binding site" evidence="2">
    <location>
        <begin position="69"/>
        <end position="77"/>
    </location>
    <ligand>
        <name>ATP</name>
        <dbReference type="ChEBI" id="CHEBI:30616"/>
    </ligand>
</feature>
<feature type="binding site" evidence="2">
    <location>
        <position position="90"/>
    </location>
    <ligand>
        <name>ATP</name>
        <dbReference type="ChEBI" id="CHEBI:30616"/>
    </ligand>
</feature>
<feature type="sequence conflict" description="In Ref. 2; CAA31689." evidence="4" ref="2">
    <original>P</original>
    <variation>R</variation>
    <location>
        <position position="46"/>
    </location>
</feature>
<sequence>MPSPIPVERFLPRDLSPSIDLRPCSSPLELSHRKLPGGLPACSGRPRLLPPRLAWCSIDWEQVLLLEPLGSGGFGSVYRATYRGETVALKKVKRSTKNSLASRQSFWAELNAARLRHPHVVRVVAASASCPGDPGCPGTIIMEYTGTGTLHQRIYGRSPPLGAEICMRYARHVADGLRFLHRDGVVHLDLKPANVLLAPGDLCKIGDFGCSQRLREGDEAAGGEPCCTQLRHVGGTYTHRAPELLKGEPVTAKADIYSFAITLWQMVSRELPYTGDRQCVLYAVVAYDLRPEMGPLFSHTEEGRAARTIVQSCWAARPQERPNAEQLLERLEQECAMCTGGPPSCSPESNAPPPLGTGL</sequence>
<dbReference type="EC" id="2.7.11.1"/>
<dbReference type="EMBL" id="M25366">
    <property type="protein sequence ID" value="AAA49677.1"/>
    <property type="molecule type" value="mRNA"/>
</dbReference>
<dbReference type="EMBL" id="X13311">
    <property type="protein sequence ID" value="CAA31689.1"/>
    <property type="molecule type" value="mRNA"/>
</dbReference>
<dbReference type="PIR" id="S06433">
    <property type="entry name" value="TVXLMS"/>
</dbReference>
<dbReference type="RefSeq" id="NP_001081563.1">
    <property type="nucleotide sequence ID" value="NM_001088094.1"/>
</dbReference>
<dbReference type="SMR" id="P12965"/>
<dbReference type="BioGRID" id="99260">
    <property type="interactions" value="3"/>
</dbReference>
<dbReference type="iPTMnet" id="P12965"/>
<dbReference type="GeneID" id="397924"/>
<dbReference type="KEGG" id="xla:397924"/>
<dbReference type="AGR" id="Xenbase:XB-GENE-1011507"/>
<dbReference type="CTD" id="397924"/>
<dbReference type="Xenbase" id="XB-GENE-1011507">
    <property type="gene designation" value="mos.L"/>
</dbReference>
<dbReference type="OrthoDB" id="4062651at2759"/>
<dbReference type="BRENDA" id="2.7.10.2">
    <property type="organism ID" value="6725"/>
</dbReference>
<dbReference type="Proteomes" id="UP000186698">
    <property type="component" value="Chromosome 6L"/>
</dbReference>
<dbReference type="Bgee" id="397924">
    <property type="expression patterns" value="Expressed in blastula and 19 other cell types or tissues"/>
</dbReference>
<dbReference type="GO" id="GO:0005737">
    <property type="term" value="C:cytoplasm"/>
    <property type="evidence" value="ECO:0000318"/>
    <property type="project" value="GO_Central"/>
</dbReference>
<dbReference type="GO" id="GO:0005524">
    <property type="term" value="F:ATP binding"/>
    <property type="evidence" value="ECO:0007669"/>
    <property type="project" value="UniProtKB-KW"/>
</dbReference>
<dbReference type="GO" id="GO:0004709">
    <property type="term" value="F:MAP kinase kinase kinase activity"/>
    <property type="evidence" value="ECO:0000314"/>
    <property type="project" value="UniProtKB"/>
</dbReference>
<dbReference type="GO" id="GO:0106310">
    <property type="term" value="F:protein serine kinase activity"/>
    <property type="evidence" value="ECO:0007669"/>
    <property type="project" value="RHEA"/>
</dbReference>
<dbReference type="GO" id="GO:0004674">
    <property type="term" value="F:protein serine/threonine kinase activity"/>
    <property type="evidence" value="ECO:0000318"/>
    <property type="project" value="GO_Central"/>
</dbReference>
<dbReference type="GO" id="GO:0000165">
    <property type="term" value="P:MAPK cascade"/>
    <property type="evidence" value="ECO:0000314"/>
    <property type="project" value="UniProtKB"/>
</dbReference>
<dbReference type="GO" id="GO:0046777">
    <property type="term" value="P:protein autophosphorylation"/>
    <property type="evidence" value="ECO:0000314"/>
    <property type="project" value="UniProtKB"/>
</dbReference>
<dbReference type="GO" id="GO:0007165">
    <property type="term" value="P:signal transduction"/>
    <property type="evidence" value="ECO:0000318"/>
    <property type="project" value="GO_Central"/>
</dbReference>
<dbReference type="CDD" id="cd13979">
    <property type="entry name" value="STKc_Mos"/>
    <property type="match status" value="1"/>
</dbReference>
<dbReference type="FunFam" id="1.10.510.10:FF:000490">
    <property type="entry name" value="Proto-oncogene serine/threonine-protein kinase mos"/>
    <property type="match status" value="1"/>
</dbReference>
<dbReference type="FunFam" id="3.30.200.20:FF:000316">
    <property type="entry name" value="Proto-oncogene serine/threonine-protein kinase mos"/>
    <property type="match status" value="1"/>
</dbReference>
<dbReference type="Gene3D" id="3.30.200.20">
    <property type="entry name" value="Phosphorylase Kinase, domain 1"/>
    <property type="match status" value="1"/>
</dbReference>
<dbReference type="Gene3D" id="1.10.510.10">
    <property type="entry name" value="Transferase(Phosphotransferase) domain 1"/>
    <property type="match status" value="1"/>
</dbReference>
<dbReference type="InterPro" id="IPR011009">
    <property type="entry name" value="Kinase-like_dom_sf"/>
</dbReference>
<dbReference type="InterPro" id="IPR000719">
    <property type="entry name" value="Prot_kinase_dom"/>
</dbReference>
<dbReference type="InterPro" id="IPR017441">
    <property type="entry name" value="Protein_kinase_ATP_BS"/>
</dbReference>
<dbReference type="InterPro" id="IPR008271">
    <property type="entry name" value="Ser/Thr_kinase_AS"/>
</dbReference>
<dbReference type="InterPro" id="IPR051681">
    <property type="entry name" value="Ser/Thr_Kinases-Pseudokinases"/>
</dbReference>
<dbReference type="PANTHER" id="PTHR44329">
    <property type="entry name" value="SERINE/THREONINE-PROTEIN KINASE TNNI3K-RELATED"/>
    <property type="match status" value="1"/>
</dbReference>
<dbReference type="PANTHER" id="PTHR44329:SF285">
    <property type="entry name" value="V-MOS MOLONEY MURINE SARCOMA VIRAL ONCO HOMOLOG"/>
    <property type="match status" value="1"/>
</dbReference>
<dbReference type="Pfam" id="PF00069">
    <property type="entry name" value="Pkinase"/>
    <property type="match status" value="1"/>
</dbReference>
<dbReference type="SMART" id="SM00220">
    <property type="entry name" value="S_TKc"/>
    <property type="match status" value="1"/>
</dbReference>
<dbReference type="SUPFAM" id="SSF56112">
    <property type="entry name" value="Protein kinase-like (PK-like)"/>
    <property type="match status" value="1"/>
</dbReference>
<dbReference type="PROSITE" id="PS00107">
    <property type="entry name" value="PROTEIN_KINASE_ATP"/>
    <property type="match status" value="1"/>
</dbReference>
<dbReference type="PROSITE" id="PS50011">
    <property type="entry name" value="PROTEIN_KINASE_DOM"/>
    <property type="match status" value="1"/>
</dbReference>
<dbReference type="PROSITE" id="PS00108">
    <property type="entry name" value="PROTEIN_KINASE_ST"/>
    <property type="match status" value="1"/>
</dbReference>
<comment type="function">
    <text evidence="1">Serine/threonine kinase involved in the regulation of MAPK signaling.</text>
</comment>
<comment type="catalytic activity">
    <reaction>
        <text>L-seryl-[protein] + ATP = O-phospho-L-seryl-[protein] + ADP + H(+)</text>
        <dbReference type="Rhea" id="RHEA:17989"/>
        <dbReference type="Rhea" id="RHEA-COMP:9863"/>
        <dbReference type="Rhea" id="RHEA-COMP:11604"/>
        <dbReference type="ChEBI" id="CHEBI:15378"/>
        <dbReference type="ChEBI" id="CHEBI:29999"/>
        <dbReference type="ChEBI" id="CHEBI:30616"/>
        <dbReference type="ChEBI" id="CHEBI:83421"/>
        <dbReference type="ChEBI" id="CHEBI:456216"/>
        <dbReference type="EC" id="2.7.11.1"/>
    </reaction>
</comment>
<comment type="catalytic activity">
    <reaction>
        <text>L-threonyl-[protein] + ATP = O-phospho-L-threonyl-[protein] + ADP + H(+)</text>
        <dbReference type="Rhea" id="RHEA:46608"/>
        <dbReference type="Rhea" id="RHEA-COMP:11060"/>
        <dbReference type="Rhea" id="RHEA-COMP:11605"/>
        <dbReference type="ChEBI" id="CHEBI:15378"/>
        <dbReference type="ChEBI" id="CHEBI:30013"/>
        <dbReference type="ChEBI" id="CHEBI:30616"/>
        <dbReference type="ChEBI" id="CHEBI:61977"/>
        <dbReference type="ChEBI" id="CHEBI:456216"/>
        <dbReference type="EC" id="2.7.11.1"/>
    </reaction>
</comment>
<comment type="subcellular location">
    <subcellularLocation>
        <location evidence="1">Cytoplasm</location>
    </subcellularLocation>
</comment>
<comment type="similarity">
    <text evidence="2">Belongs to the protein kinase superfamily. Ser/Thr protein kinase family.</text>
</comment>
<accession>P12965</accession>
<organism>
    <name type="scientific">Xenopus laevis</name>
    <name type="common">African clawed frog</name>
    <dbReference type="NCBI Taxonomy" id="8355"/>
    <lineage>
        <taxon>Eukaryota</taxon>
        <taxon>Metazoa</taxon>
        <taxon>Chordata</taxon>
        <taxon>Craniata</taxon>
        <taxon>Vertebrata</taxon>
        <taxon>Euteleostomi</taxon>
        <taxon>Amphibia</taxon>
        <taxon>Batrachia</taxon>
        <taxon>Anura</taxon>
        <taxon>Pipoidea</taxon>
        <taxon>Pipidae</taxon>
        <taxon>Xenopodinae</taxon>
        <taxon>Xenopus</taxon>
        <taxon>Xenopus</taxon>
    </lineage>
</organism>
<proteinExistence type="evidence at transcript level"/>
<protein>
    <recommendedName>
        <fullName>Serine/threonine-protein kinase mos</fullName>
        <ecNumber>2.7.11.1</ecNumber>
    </recommendedName>
    <alternativeName>
        <fullName>pp39-mos</fullName>
    </alternativeName>
</protein>
<reference key="1">
    <citation type="journal article" date="1989" name="Proc. Natl. Acad. Sci. U.S.A.">
        <title>Xenopus homolog of the mos protooncogene transforms mammalian fibroblasts and induces maturation of Xenopus oocytes.</title>
        <authorList>
            <person name="Freeman R.S."/>
            <person name="Pickham K.M."/>
            <person name="Kanki J.P."/>
            <person name="Lee B.A."/>
            <person name="Pena S.V."/>
            <person name="Donoghue D.J."/>
        </authorList>
    </citation>
    <scope>NUCLEOTIDE SEQUENCE [MRNA]</scope>
</reference>
<reference key="2">
    <citation type="journal article" date="1988" name="Nature">
        <title>Function of c-mos proto-oncogene product in meiotic maturation in Xenopus oocytes.</title>
        <authorList>
            <person name="Sagata N."/>
            <person name="Oskarsson M."/>
            <person name="Copeland T."/>
            <person name="Brumbaugh J."/>
            <person name="Vande Woude G.F."/>
        </authorList>
    </citation>
    <scope>NUCLEOTIDE SEQUENCE [MRNA]</scope>
</reference>
<gene>
    <name type="primary">mos</name>
</gene>